<comment type="function">
    <text evidence="1">Catalyzes the methyl esterification of L-isoaspartyl residues in peptides and proteins that result from spontaneous decomposition of normal L-aspartyl and L-asparaginyl residues. It plays a role in the repair and/or degradation of damaged proteins.</text>
</comment>
<comment type="catalytic activity">
    <reaction evidence="1">
        <text>[protein]-L-isoaspartate + S-adenosyl-L-methionine = [protein]-L-isoaspartate alpha-methyl ester + S-adenosyl-L-homocysteine</text>
        <dbReference type="Rhea" id="RHEA:12705"/>
        <dbReference type="Rhea" id="RHEA-COMP:12143"/>
        <dbReference type="Rhea" id="RHEA-COMP:12144"/>
        <dbReference type="ChEBI" id="CHEBI:57856"/>
        <dbReference type="ChEBI" id="CHEBI:59789"/>
        <dbReference type="ChEBI" id="CHEBI:90596"/>
        <dbReference type="ChEBI" id="CHEBI:90598"/>
        <dbReference type="EC" id="2.1.1.77"/>
    </reaction>
</comment>
<comment type="subcellular location">
    <subcellularLocation>
        <location evidence="1">Cytoplasm</location>
    </subcellularLocation>
</comment>
<comment type="similarity">
    <text evidence="1">Belongs to the methyltransferase superfamily. L-isoaspartyl/D-aspartyl protein methyltransferase family.</text>
</comment>
<proteinExistence type="inferred from homology"/>
<feature type="chain" id="PRO_1000117209" description="Protein-L-isoaspartate O-methyltransferase">
    <location>
        <begin position="1"/>
        <end position="211"/>
    </location>
</feature>
<feature type="active site" evidence="1">
    <location>
        <position position="60"/>
    </location>
</feature>
<name>PIMT_HAHCH</name>
<evidence type="ECO:0000255" key="1">
    <source>
        <dbReference type="HAMAP-Rule" id="MF_00090"/>
    </source>
</evidence>
<keyword id="KW-0963">Cytoplasm</keyword>
<keyword id="KW-0489">Methyltransferase</keyword>
<keyword id="KW-1185">Reference proteome</keyword>
<keyword id="KW-0949">S-adenosyl-L-methionine</keyword>
<keyword id="KW-0808">Transferase</keyword>
<sequence>MTSRRTRLRLIERLRKNGIQNEAVLEAMTEIPRHIFVDEALAHRAYEDTALPIGHSQTISQPYIVARMTELLCSGWKPKRVLEVGAGSGYQTAILARLSTQVYTVERIAPLLEKAKLRFKALKLNNVSAKLSDGRWGWPEQGPFDAIMVTAAPEQTPSELLEQLADGGRLVIPVGSGSEQMLKVYKRQGAEIEESSLEQVRFVPLLGGVVR</sequence>
<reference key="1">
    <citation type="journal article" date="2005" name="Nucleic Acids Res.">
        <title>Genomic blueprint of Hahella chejuensis, a marine microbe producing an algicidal agent.</title>
        <authorList>
            <person name="Jeong H."/>
            <person name="Yim J.H."/>
            <person name="Lee C."/>
            <person name="Choi S.-H."/>
            <person name="Park Y.K."/>
            <person name="Yoon S.H."/>
            <person name="Hur C.-G."/>
            <person name="Kang H.-Y."/>
            <person name="Kim D."/>
            <person name="Lee H.H."/>
            <person name="Park K.H."/>
            <person name="Park S.-H."/>
            <person name="Park H.-S."/>
            <person name="Lee H.K."/>
            <person name="Oh T.K."/>
            <person name="Kim J.F."/>
        </authorList>
    </citation>
    <scope>NUCLEOTIDE SEQUENCE [LARGE SCALE GENOMIC DNA]</scope>
    <source>
        <strain>KCTC 2396</strain>
    </source>
</reference>
<organism>
    <name type="scientific">Hahella chejuensis (strain KCTC 2396)</name>
    <dbReference type="NCBI Taxonomy" id="349521"/>
    <lineage>
        <taxon>Bacteria</taxon>
        <taxon>Pseudomonadati</taxon>
        <taxon>Pseudomonadota</taxon>
        <taxon>Gammaproteobacteria</taxon>
        <taxon>Oceanospirillales</taxon>
        <taxon>Hahellaceae</taxon>
        <taxon>Hahella</taxon>
    </lineage>
</organism>
<gene>
    <name evidence="1" type="primary">pcm</name>
    <name type="ordered locus">HCH_01874</name>
</gene>
<dbReference type="EC" id="2.1.1.77" evidence="1"/>
<dbReference type="EMBL" id="CP000155">
    <property type="protein sequence ID" value="ABC28711.1"/>
    <property type="molecule type" value="Genomic_DNA"/>
</dbReference>
<dbReference type="SMR" id="Q2SKW3"/>
<dbReference type="STRING" id="349521.HCH_01874"/>
<dbReference type="KEGG" id="hch:HCH_01874"/>
<dbReference type="eggNOG" id="COG2518">
    <property type="taxonomic scope" value="Bacteria"/>
</dbReference>
<dbReference type="HOGENOM" id="CLU_055432_2_0_6"/>
<dbReference type="Proteomes" id="UP000000238">
    <property type="component" value="Chromosome"/>
</dbReference>
<dbReference type="GO" id="GO:0005737">
    <property type="term" value="C:cytoplasm"/>
    <property type="evidence" value="ECO:0007669"/>
    <property type="project" value="UniProtKB-SubCell"/>
</dbReference>
<dbReference type="GO" id="GO:0004719">
    <property type="term" value="F:protein-L-isoaspartate (D-aspartate) O-methyltransferase activity"/>
    <property type="evidence" value="ECO:0007669"/>
    <property type="project" value="UniProtKB-UniRule"/>
</dbReference>
<dbReference type="GO" id="GO:0032259">
    <property type="term" value="P:methylation"/>
    <property type="evidence" value="ECO:0007669"/>
    <property type="project" value="UniProtKB-KW"/>
</dbReference>
<dbReference type="GO" id="GO:0036211">
    <property type="term" value="P:protein modification process"/>
    <property type="evidence" value="ECO:0007669"/>
    <property type="project" value="UniProtKB-UniRule"/>
</dbReference>
<dbReference type="GO" id="GO:0030091">
    <property type="term" value="P:protein repair"/>
    <property type="evidence" value="ECO:0007669"/>
    <property type="project" value="UniProtKB-UniRule"/>
</dbReference>
<dbReference type="CDD" id="cd02440">
    <property type="entry name" value="AdoMet_MTases"/>
    <property type="match status" value="1"/>
</dbReference>
<dbReference type="FunFam" id="3.40.50.150:FF:000010">
    <property type="entry name" value="Protein-L-isoaspartate O-methyltransferase"/>
    <property type="match status" value="1"/>
</dbReference>
<dbReference type="Gene3D" id="3.40.50.150">
    <property type="entry name" value="Vaccinia Virus protein VP39"/>
    <property type="match status" value="1"/>
</dbReference>
<dbReference type="HAMAP" id="MF_00090">
    <property type="entry name" value="PIMT"/>
    <property type="match status" value="1"/>
</dbReference>
<dbReference type="InterPro" id="IPR000682">
    <property type="entry name" value="PCMT"/>
</dbReference>
<dbReference type="InterPro" id="IPR029063">
    <property type="entry name" value="SAM-dependent_MTases_sf"/>
</dbReference>
<dbReference type="NCBIfam" id="TIGR00080">
    <property type="entry name" value="pimt"/>
    <property type="match status" value="1"/>
</dbReference>
<dbReference type="NCBIfam" id="NF001453">
    <property type="entry name" value="PRK00312.1"/>
    <property type="match status" value="1"/>
</dbReference>
<dbReference type="PANTHER" id="PTHR11579">
    <property type="entry name" value="PROTEIN-L-ISOASPARTATE O-METHYLTRANSFERASE"/>
    <property type="match status" value="1"/>
</dbReference>
<dbReference type="PANTHER" id="PTHR11579:SF0">
    <property type="entry name" value="PROTEIN-L-ISOASPARTATE(D-ASPARTATE) O-METHYLTRANSFERASE"/>
    <property type="match status" value="1"/>
</dbReference>
<dbReference type="Pfam" id="PF01135">
    <property type="entry name" value="PCMT"/>
    <property type="match status" value="1"/>
</dbReference>
<dbReference type="SUPFAM" id="SSF53335">
    <property type="entry name" value="S-adenosyl-L-methionine-dependent methyltransferases"/>
    <property type="match status" value="1"/>
</dbReference>
<dbReference type="PROSITE" id="PS01279">
    <property type="entry name" value="PCMT"/>
    <property type="match status" value="1"/>
</dbReference>
<protein>
    <recommendedName>
        <fullName evidence="1">Protein-L-isoaspartate O-methyltransferase</fullName>
        <ecNumber evidence="1">2.1.1.77</ecNumber>
    </recommendedName>
    <alternativeName>
        <fullName evidence="1">L-isoaspartyl protein carboxyl methyltransferase</fullName>
    </alternativeName>
    <alternativeName>
        <fullName evidence="1">Protein L-isoaspartyl methyltransferase</fullName>
    </alternativeName>
    <alternativeName>
        <fullName evidence="1">Protein-beta-aspartate methyltransferase</fullName>
        <shortName evidence="1">PIMT</shortName>
    </alternativeName>
</protein>
<accession>Q2SKW3</accession>